<evidence type="ECO:0000305" key="1"/>
<gene>
    <name type="primary">clrD</name>
</gene>
<name>CLRD_IDEDE</name>
<feature type="chain" id="PRO_0000089872" description="Chlorate reductase assembly chaperone protein">
    <location>
        <begin position="1"/>
        <end position="193"/>
    </location>
</feature>
<accession>P60001</accession>
<reference key="1">
    <citation type="journal article" date="2003" name="Appl. Environ. Microbiol.">
        <title>A gene cluster for chlorate metabolism in Ideonella dechloratans.</title>
        <authorList>
            <person name="Danielsson Thorell H."/>
            <person name="Stenklo K."/>
            <person name="Karlsson J."/>
            <person name="Nilsson T."/>
        </authorList>
    </citation>
    <scope>NUCLEOTIDE SEQUENCE [GENOMIC DNA]</scope>
    <scope>CHARACTERIZATION</scope>
</reference>
<dbReference type="EMBL" id="AJ566363">
    <property type="protein sequence ID" value="CAD97449.1"/>
    <property type="molecule type" value="Genomic_DNA"/>
</dbReference>
<dbReference type="RefSeq" id="WP_013516313.1">
    <property type="nucleotide sequence ID" value="NZ_VZPB01000026.1"/>
</dbReference>
<dbReference type="SMR" id="P60001"/>
<dbReference type="OrthoDB" id="9155486at2"/>
<dbReference type="GO" id="GO:0005737">
    <property type="term" value="C:cytoplasm"/>
    <property type="evidence" value="ECO:0007669"/>
    <property type="project" value="UniProtKB-SubCell"/>
</dbReference>
<dbReference type="Gene3D" id="1.10.3480.10">
    <property type="entry name" value="TorD-like"/>
    <property type="match status" value="1"/>
</dbReference>
<dbReference type="InterPro" id="IPR020945">
    <property type="entry name" value="DMSO/NO3_reduct_chaperone"/>
</dbReference>
<dbReference type="InterPro" id="IPR017843">
    <property type="entry name" value="DMSO_Rdtase_II_chaperone"/>
</dbReference>
<dbReference type="InterPro" id="IPR036411">
    <property type="entry name" value="TorD-like_sf"/>
</dbReference>
<dbReference type="InterPro" id="IPR050289">
    <property type="entry name" value="TorD/DmsD_chaperones"/>
</dbReference>
<dbReference type="NCBIfam" id="TIGR03482">
    <property type="entry name" value="DMSO_red_II_cha"/>
    <property type="match status" value="1"/>
</dbReference>
<dbReference type="PANTHER" id="PTHR34227">
    <property type="entry name" value="CHAPERONE PROTEIN YCDY"/>
    <property type="match status" value="1"/>
</dbReference>
<dbReference type="PANTHER" id="PTHR34227:SF1">
    <property type="entry name" value="DIMETHYL SULFOXIDE REDUCTASE CHAPERONE-RELATED"/>
    <property type="match status" value="1"/>
</dbReference>
<dbReference type="Pfam" id="PF02613">
    <property type="entry name" value="Nitrate_red_del"/>
    <property type="match status" value="1"/>
</dbReference>
<dbReference type="SUPFAM" id="SSF89155">
    <property type="entry name" value="TorD-like"/>
    <property type="match status" value="1"/>
</dbReference>
<proteinExistence type="evidence at protein level"/>
<protein>
    <recommendedName>
        <fullName>Chlorate reductase assembly chaperone protein</fullName>
    </recommendedName>
</protein>
<organism>
    <name type="scientific">Ideonella dechloratans</name>
    <dbReference type="NCBI Taxonomy" id="36863"/>
    <lineage>
        <taxon>Bacteria</taxon>
        <taxon>Pseudomonadati</taxon>
        <taxon>Pseudomonadota</taxon>
        <taxon>Betaproteobacteria</taxon>
        <taxon>Burkholderiales</taxon>
        <taxon>Sphaerotilaceae</taxon>
        <taxon>Ideonella</taxon>
    </lineage>
</organism>
<keyword id="KW-0143">Chaperone</keyword>
<keyword id="KW-0963">Cytoplasm</keyword>
<sequence length="193" mass="22249">MNTLIDNPKAMASGYLAMAQMFSYPDADAWRRLTENGLVDPALGRETLEAEYLGLFEMGGGTSTMSLYEGQNRPERGRDGILQELLRFYEFFDVHLNQDEREYPDHLVTELEFLAWLCLQEHAALRDGRDAEPFQNAARDFLVRHLAAWLPDFRQRLEATETTYAQYGPTLGELVETHRSRLGDQPQKSREMQ</sequence>
<comment type="function">
    <text>May function as a system-specific chaperone protein essential for the assembly of an active chlorate reductase ClrABC.</text>
</comment>
<comment type="subcellular location">
    <subcellularLocation>
        <location evidence="1">Cytoplasm</location>
    </subcellularLocation>
</comment>
<comment type="biotechnology">
    <text>Has potential use in bioremediation of waste sites contaminated with chlorate, such as pulp and paper industry wastewater.</text>
</comment>
<comment type="similarity">
    <text evidence="1">Belongs to the type II DMSO reductase enzyme chaperone family.</text>
</comment>